<reference key="1">
    <citation type="submission" date="2007-11" db="EMBL/GenBank/DDBJ databases">
        <title>Complete sequence of chromosome of Shewanella baltica OS195.</title>
        <authorList>
            <consortium name="US DOE Joint Genome Institute"/>
            <person name="Copeland A."/>
            <person name="Lucas S."/>
            <person name="Lapidus A."/>
            <person name="Barry K."/>
            <person name="Glavina del Rio T."/>
            <person name="Dalin E."/>
            <person name="Tice H."/>
            <person name="Pitluck S."/>
            <person name="Chain P."/>
            <person name="Malfatti S."/>
            <person name="Shin M."/>
            <person name="Vergez L."/>
            <person name="Schmutz J."/>
            <person name="Larimer F."/>
            <person name="Land M."/>
            <person name="Hauser L."/>
            <person name="Kyrpides N."/>
            <person name="Kim E."/>
            <person name="Brettar I."/>
            <person name="Rodrigues J."/>
            <person name="Konstantinidis K."/>
            <person name="Klappenbach J."/>
            <person name="Hofle M."/>
            <person name="Tiedje J."/>
            <person name="Richardson P."/>
        </authorList>
    </citation>
    <scope>NUCLEOTIDE SEQUENCE [LARGE SCALE GENOMIC DNA]</scope>
    <source>
        <strain>OS195</strain>
    </source>
</reference>
<sequence length="83" mass="9295">MVTIRLARGGAKKRPFYNIVVADSRNARDGRFIERVGFFNPLARGQEETLRLDLARVEHWVSNGAAATERVAKLIKDARKATA</sequence>
<feature type="chain" id="PRO_1000080169" description="Small ribosomal subunit protein bS16">
    <location>
        <begin position="1"/>
        <end position="83"/>
    </location>
</feature>
<accession>A9L5P5</accession>
<proteinExistence type="inferred from homology"/>
<comment type="similarity">
    <text evidence="1">Belongs to the bacterial ribosomal protein bS16 family.</text>
</comment>
<evidence type="ECO:0000255" key="1">
    <source>
        <dbReference type="HAMAP-Rule" id="MF_00385"/>
    </source>
</evidence>
<evidence type="ECO:0000305" key="2"/>
<keyword id="KW-0687">Ribonucleoprotein</keyword>
<keyword id="KW-0689">Ribosomal protein</keyword>
<protein>
    <recommendedName>
        <fullName evidence="1">Small ribosomal subunit protein bS16</fullName>
    </recommendedName>
    <alternativeName>
        <fullName evidence="2">30S ribosomal protein S16</fullName>
    </alternativeName>
</protein>
<dbReference type="EMBL" id="CP000891">
    <property type="protein sequence ID" value="ABX48462.1"/>
    <property type="molecule type" value="Genomic_DNA"/>
</dbReference>
<dbReference type="RefSeq" id="WP_006080788.1">
    <property type="nucleotide sequence ID" value="NC_009997.1"/>
</dbReference>
<dbReference type="SMR" id="A9L5P5"/>
<dbReference type="GeneID" id="11771555"/>
<dbReference type="KEGG" id="sbn:Sbal195_1287"/>
<dbReference type="HOGENOM" id="CLU_100590_5_1_6"/>
<dbReference type="Proteomes" id="UP000000770">
    <property type="component" value="Chromosome"/>
</dbReference>
<dbReference type="GO" id="GO:0005737">
    <property type="term" value="C:cytoplasm"/>
    <property type="evidence" value="ECO:0007669"/>
    <property type="project" value="UniProtKB-ARBA"/>
</dbReference>
<dbReference type="GO" id="GO:0015935">
    <property type="term" value="C:small ribosomal subunit"/>
    <property type="evidence" value="ECO:0007669"/>
    <property type="project" value="TreeGrafter"/>
</dbReference>
<dbReference type="GO" id="GO:0003735">
    <property type="term" value="F:structural constituent of ribosome"/>
    <property type="evidence" value="ECO:0007669"/>
    <property type="project" value="InterPro"/>
</dbReference>
<dbReference type="GO" id="GO:0006412">
    <property type="term" value="P:translation"/>
    <property type="evidence" value="ECO:0007669"/>
    <property type="project" value="UniProtKB-UniRule"/>
</dbReference>
<dbReference type="FunFam" id="3.30.1320.10:FF:000001">
    <property type="entry name" value="30S ribosomal protein S16"/>
    <property type="match status" value="1"/>
</dbReference>
<dbReference type="Gene3D" id="3.30.1320.10">
    <property type="match status" value="1"/>
</dbReference>
<dbReference type="HAMAP" id="MF_00385">
    <property type="entry name" value="Ribosomal_bS16"/>
    <property type="match status" value="1"/>
</dbReference>
<dbReference type="InterPro" id="IPR000307">
    <property type="entry name" value="Ribosomal_bS16"/>
</dbReference>
<dbReference type="InterPro" id="IPR020592">
    <property type="entry name" value="Ribosomal_bS16_CS"/>
</dbReference>
<dbReference type="InterPro" id="IPR023803">
    <property type="entry name" value="Ribosomal_bS16_dom_sf"/>
</dbReference>
<dbReference type="NCBIfam" id="TIGR00002">
    <property type="entry name" value="S16"/>
    <property type="match status" value="1"/>
</dbReference>
<dbReference type="PANTHER" id="PTHR12919">
    <property type="entry name" value="30S RIBOSOMAL PROTEIN S16"/>
    <property type="match status" value="1"/>
</dbReference>
<dbReference type="PANTHER" id="PTHR12919:SF20">
    <property type="entry name" value="SMALL RIBOSOMAL SUBUNIT PROTEIN BS16M"/>
    <property type="match status" value="1"/>
</dbReference>
<dbReference type="Pfam" id="PF00886">
    <property type="entry name" value="Ribosomal_S16"/>
    <property type="match status" value="1"/>
</dbReference>
<dbReference type="SUPFAM" id="SSF54565">
    <property type="entry name" value="Ribosomal protein S16"/>
    <property type="match status" value="1"/>
</dbReference>
<dbReference type="PROSITE" id="PS00732">
    <property type="entry name" value="RIBOSOMAL_S16"/>
    <property type="match status" value="1"/>
</dbReference>
<gene>
    <name evidence="1" type="primary">rpsP</name>
    <name type="ordered locus">Sbal195_1287</name>
</gene>
<organism>
    <name type="scientific">Shewanella baltica (strain OS195)</name>
    <dbReference type="NCBI Taxonomy" id="399599"/>
    <lineage>
        <taxon>Bacteria</taxon>
        <taxon>Pseudomonadati</taxon>
        <taxon>Pseudomonadota</taxon>
        <taxon>Gammaproteobacteria</taxon>
        <taxon>Alteromonadales</taxon>
        <taxon>Shewanellaceae</taxon>
        <taxon>Shewanella</taxon>
    </lineage>
</organism>
<name>RS16_SHEB9</name>